<evidence type="ECO:0000305" key="1"/>
<comment type="similarity">
    <text evidence="1">Belongs to the UPF0457 family.</text>
</comment>
<proteinExistence type="inferred from homology"/>
<sequence>MLGINVEKSNENLIINWQLSKIEIPIKEINDVFLDPNYGGEEKSAVRIGFPYGSTDRVVIKTARNTYILFTTNPALIMSKIVS</sequence>
<dbReference type="EMBL" id="AL009126">
    <property type="protein sequence ID" value="CAB13633.1"/>
    <property type="molecule type" value="Genomic_DNA"/>
</dbReference>
<dbReference type="PIR" id="A69895">
    <property type="entry name" value="A69895"/>
</dbReference>
<dbReference type="RefSeq" id="NP_389631.1">
    <property type="nucleotide sequence ID" value="NC_000964.3"/>
</dbReference>
<dbReference type="RefSeq" id="WP_003245594.1">
    <property type="nucleotide sequence ID" value="NZ_OZ025638.1"/>
</dbReference>
<dbReference type="FunCoup" id="O31800">
    <property type="interactions" value="19"/>
</dbReference>
<dbReference type="STRING" id="224308.BSU17490"/>
<dbReference type="PaxDb" id="224308-BSU17490"/>
<dbReference type="EnsemblBacteria" id="CAB13633">
    <property type="protein sequence ID" value="CAB13633"/>
    <property type="gene ID" value="BSU_17490"/>
</dbReference>
<dbReference type="GeneID" id="938126"/>
<dbReference type="KEGG" id="bsu:BSU17490"/>
<dbReference type="PATRIC" id="fig|224308.179.peg.1897"/>
<dbReference type="eggNOG" id="ENOG50332PH">
    <property type="taxonomic scope" value="Bacteria"/>
</dbReference>
<dbReference type="InParanoid" id="O31800"/>
<dbReference type="OrthoDB" id="2623008at2"/>
<dbReference type="PhylomeDB" id="O31800"/>
<dbReference type="BioCyc" id="BSUB:BSU17490-MONOMER"/>
<dbReference type="Proteomes" id="UP000001570">
    <property type="component" value="Chromosome"/>
</dbReference>
<dbReference type="InterPro" id="IPR055365">
    <property type="entry name" value="PH_SunI-like"/>
</dbReference>
<dbReference type="Pfam" id="PF23491">
    <property type="entry name" value="bPH_8"/>
    <property type="match status" value="1"/>
</dbReference>
<name>YNZG_BACSU</name>
<organism>
    <name type="scientific">Bacillus subtilis (strain 168)</name>
    <dbReference type="NCBI Taxonomy" id="224308"/>
    <lineage>
        <taxon>Bacteria</taxon>
        <taxon>Bacillati</taxon>
        <taxon>Bacillota</taxon>
        <taxon>Bacilli</taxon>
        <taxon>Bacillales</taxon>
        <taxon>Bacillaceae</taxon>
        <taxon>Bacillus</taxon>
    </lineage>
</organism>
<accession>O31800</accession>
<keyword id="KW-1185">Reference proteome</keyword>
<gene>
    <name type="primary">ynzG</name>
    <name type="ordered locus">BSU17490</name>
</gene>
<feature type="chain" id="PRO_0000294492" description="UPF0457 protein YnzG">
    <location>
        <begin position="1"/>
        <end position="83"/>
    </location>
</feature>
<reference key="1">
    <citation type="journal article" date="1997" name="Nature">
        <title>The complete genome sequence of the Gram-positive bacterium Bacillus subtilis.</title>
        <authorList>
            <person name="Kunst F."/>
            <person name="Ogasawara N."/>
            <person name="Moszer I."/>
            <person name="Albertini A.M."/>
            <person name="Alloni G."/>
            <person name="Azevedo V."/>
            <person name="Bertero M.G."/>
            <person name="Bessieres P."/>
            <person name="Bolotin A."/>
            <person name="Borchert S."/>
            <person name="Borriss R."/>
            <person name="Boursier L."/>
            <person name="Brans A."/>
            <person name="Braun M."/>
            <person name="Brignell S.C."/>
            <person name="Bron S."/>
            <person name="Brouillet S."/>
            <person name="Bruschi C.V."/>
            <person name="Caldwell B."/>
            <person name="Capuano V."/>
            <person name="Carter N.M."/>
            <person name="Choi S.-K."/>
            <person name="Codani J.-J."/>
            <person name="Connerton I.F."/>
            <person name="Cummings N.J."/>
            <person name="Daniel R.A."/>
            <person name="Denizot F."/>
            <person name="Devine K.M."/>
            <person name="Duesterhoeft A."/>
            <person name="Ehrlich S.D."/>
            <person name="Emmerson P.T."/>
            <person name="Entian K.-D."/>
            <person name="Errington J."/>
            <person name="Fabret C."/>
            <person name="Ferrari E."/>
            <person name="Foulger D."/>
            <person name="Fritz C."/>
            <person name="Fujita M."/>
            <person name="Fujita Y."/>
            <person name="Fuma S."/>
            <person name="Galizzi A."/>
            <person name="Galleron N."/>
            <person name="Ghim S.-Y."/>
            <person name="Glaser P."/>
            <person name="Goffeau A."/>
            <person name="Golightly E.J."/>
            <person name="Grandi G."/>
            <person name="Guiseppi G."/>
            <person name="Guy B.J."/>
            <person name="Haga K."/>
            <person name="Haiech J."/>
            <person name="Harwood C.R."/>
            <person name="Henaut A."/>
            <person name="Hilbert H."/>
            <person name="Holsappel S."/>
            <person name="Hosono S."/>
            <person name="Hullo M.-F."/>
            <person name="Itaya M."/>
            <person name="Jones L.-M."/>
            <person name="Joris B."/>
            <person name="Karamata D."/>
            <person name="Kasahara Y."/>
            <person name="Klaerr-Blanchard M."/>
            <person name="Klein C."/>
            <person name="Kobayashi Y."/>
            <person name="Koetter P."/>
            <person name="Koningstein G."/>
            <person name="Krogh S."/>
            <person name="Kumano M."/>
            <person name="Kurita K."/>
            <person name="Lapidus A."/>
            <person name="Lardinois S."/>
            <person name="Lauber J."/>
            <person name="Lazarevic V."/>
            <person name="Lee S.-M."/>
            <person name="Levine A."/>
            <person name="Liu H."/>
            <person name="Masuda S."/>
            <person name="Mauel C."/>
            <person name="Medigue C."/>
            <person name="Medina N."/>
            <person name="Mellado R.P."/>
            <person name="Mizuno M."/>
            <person name="Moestl D."/>
            <person name="Nakai S."/>
            <person name="Noback M."/>
            <person name="Noone D."/>
            <person name="O'Reilly M."/>
            <person name="Ogawa K."/>
            <person name="Ogiwara A."/>
            <person name="Oudega B."/>
            <person name="Park S.-H."/>
            <person name="Parro V."/>
            <person name="Pohl T.M."/>
            <person name="Portetelle D."/>
            <person name="Porwollik S."/>
            <person name="Prescott A.M."/>
            <person name="Presecan E."/>
            <person name="Pujic P."/>
            <person name="Purnelle B."/>
            <person name="Rapoport G."/>
            <person name="Rey M."/>
            <person name="Reynolds S."/>
            <person name="Rieger M."/>
            <person name="Rivolta C."/>
            <person name="Rocha E."/>
            <person name="Roche B."/>
            <person name="Rose M."/>
            <person name="Sadaie Y."/>
            <person name="Sato T."/>
            <person name="Scanlan E."/>
            <person name="Schleich S."/>
            <person name="Schroeter R."/>
            <person name="Scoffone F."/>
            <person name="Sekiguchi J."/>
            <person name="Sekowska A."/>
            <person name="Seror S.J."/>
            <person name="Serror P."/>
            <person name="Shin B.-S."/>
            <person name="Soldo B."/>
            <person name="Sorokin A."/>
            <person name="Tacconi E."/>
            <person name="Takagi T."/>
            <person name="Takahashi H."/>
            <person name="Takemaru K."/>
            <person name="Takeuchi M."/>
            <person name="Tamakoshi A."/>
            <person name="Tanaka T."/>
            <person name="Terpstra P."/>
            <person name="Tognoni A."/>
            <person name="Tosato V."/>
            <person name="Uchiyama S."/>
            <person name="Vandenbol M."/>
            <person name="Vannier F."/>
            <person name="Vassarotti A."/>
            <person name="Viari A."/>
            <person name="Wambutt R."/>
            <person name="Wedler E."/>
            <person name="Wedler H."/>
            <person name="Weitzenegger T."/>
            <person name="Winters P."/>
            <person name="Wipat A."/>
            <person name="Yamamoto H."/>
            <person name="Yamane K."/>
            <person name="Yasumoto K."/>
            <person name="Yata K."/>
            <person name="Yoshida K."/>
            <person name="Yoshikawa H.-F."/>
            <person name="Zumstein E."/>
            <person name="Yoshikawa H."/>
            <person name="Danchin A."/>
        </authorList>
    </citation>
    <scope>NUCLEOTIDE SEQUENCE [LARGE SCALE GENOMIC DNA]</scope>
    <source>
        <strain>168</strain>
    </source>
</reference>
<protein>
    <recommendedName>
        <fullName>UPF0457 protein YnzG</fullName>
    </recommendedName>
</protein>